<sequence>MLQPKRRKYRKEQKGRNTGIATRGNAVSFGEFGLKAVGRGRLTARQIEAARRAMTRHIKRGGRIWIRIFPDKPISQKPAEVRMGNGKGNPEYYVAEIQPGKMLYEMDGVSEELAREAFRLAAAKLPLKTTFIVRQLGA</sequence>
<gene>
    <name evidence="1" type="primary">rplP</name>
    <name type="ordered locus">BURPS1106A_3797</name>
</gene>
<comment type="function">
    <text evidence="1">Binds 23S rRNA and is also seen to make contacts with the A and possibly P site tRNAs.</text>
</comment>
<comment type="subunit">
    <text evidence="1">Part of the 50S ribosomal subunit.</text>
</comment>
<comment type="similarity">
    <text evidence="1">Belongs to the universal ribosomal protein uL16 family.</text>
</comment>
<organism>
    <name type="scientific">Burkholderia pseudomallei (strain 1106a)</name>
    <dbReference type="NCBI Taxonomy" id="357348"/>
    <lineage>
        <taxon>Bacteria</taxon>
        <taxon>Pseudomonadati</taxon>
        <taxon>Pseudomonadota</taxon>
        <taxon>Betaproteobacteria</taxon>
        <taxon>Burkholderiales</taxon>
        <taxon>Burkholderiaceae</taxon>
        <taxon>Burkholderia</taxon>
        <taxon>pseudomallei group</taxon>
    </lineage>
</organism>
<protein>
    <recommendedName>
        <fullName evidence="1">Large ribosomal subunit protein uL16</fullName>
    </recommendedName>
    <alternativeName>
        <fullName evidence="3">50S ribosomal protein L16</fullName>
    </alternativeName>
</protein>
<reference key="1">
    <citation type="journal article" date="2010" name="Genome Biol. Evol.">
        <title>Continuing evolution of Burkholderia mallei through genome reduction and large-scale rearrangements.</title>
        <authorList>
            <person name="Losada L."/>
            <person name="Ronning C.M."/>
            <person name="DeShazer D."/>
            <person name="Woods D."/>
            <person name="Fedorova N."/>
            <person name="Kim H.S."/>
            <person name="Shabalina S.A."/>
            <person name="Pearson T.R."/>
            <person name="Brinkac L."/>
            <person name="Tan P."/>
            <person name="Nandi T."/>
            <person name="Crabtree J."/>
            <person name="Badger J."/>
            <person name="Beckstrom-Sternberg S."/>
            <person name="Saqib M."/>
            <person name="Schutzer S.E."/>
            <person name="Keim P."/>
            <person name="Nierman W.C."/>
        </authorList>
    </citation>
    <scope>NUCLEOTIDE SEQUENCE [LARGE SCALE GENOMIC DNA]</scope>
    <source>
        <strain>1106a</strain>
    </source>
</reference>
<keyword id="KW-0687">Ribonucleoprotein</keyword>
<keyword id="KW-0689">Ribosomal protein</keyword>
<keyword id="KW-0694">RNA-binding</keyword>
<keyword id="KW-0699">rRNA-binding</keyword>
<keyword id="KW-0820">tRNA-binding</keyword>
<name>RL16_BURP0</name>
<dbReference type="EMBL" id="CP000572">
    <property type="protein sequence ID" value="ABN89178.1"/>
    <property type="molecule type" value="Genomic_DNA"/>
</dbReference>
<dbReference type="RefSeq" id="WP_004199857.1">
    <property type="nucleotide sequence ID" value="NC_009076.1"/>
</dbReference>
<dbReference type="SMR" id="A3P0A6"/>
<dbReference type="GeneID" id="93061825"/>
<dbReference type="KEGG" id="bpl:BURPS1106A_3797"/>
<dbReference type="HOGENOM" id="CLU_078858_2_1_4"/>
<dbReference type="Proteomes" id="UP000006738">
    <property type="component" value="Chromosome I"/>
</dbReference>
<dbReference type="GO" id="GO:0022625">
    <property type="term" value="C:cytosolic large ribosomal subunit"/>
    <property type="evidence" value="ECO:0007669"/>
    <property type="project" value="TreeGrafter"/>
</dbReference>
<dbReference type="GO" id="GO:0019843">
    <property type="term" value="F:rRNA binding"/>
    <property type="evidence" value="ECO:0007669"/>
    <property type="project" value="UniProtKB-UniRule"/>
</dbReference>
<dbReference type="GO" id="GO:0003735">
    <property type="term" value="F:structural constituent of ribosome"/>
    <property type="evidence" value="ECO:0007669"/>
    <property type="project" value="InterPro"/>
</dbReference>
<dbReference type="GO" id="GO:0000049">
    <property type="term" value="F:tRNA binding"/>
    <property type="evidence" value="ECO:0007669"/>
    <property type="project" value="UniProtKB-KW"/>
</dbReference>
<dbReference type="GO" id="GO:0006412">
    <property type="term" value="P:translation"/>
    <property type="evidence" value="ECO:0007669"/>
    <property type="project" value="UniProtKB-UniRule"/>
</dbReference>
<dbReference type="CDD" id="cd01433">
    <property type="entry name" value="Ribosomal_L16_L10e"/>
    <property type="match status" value="1"/>
</dbReference>
<dbReference type="FunFam" id="3.90.1170.10:FF:000001">
    <property type="entry name" value="50S ribosomal protein L16"/>
    <property type="match status" value="1"/>
</dbReference>
<dbReference type="Gene3D" id="3.90.1170.10">
    <property type="entry name" value="Ribosomal protein L10e/L16"/>
    <property type="match status" value="1"/>
</dbReference>
<dbReference type="HAMAP" id="MF_01342">
    <property type="entry name" value="Ribosomal_uL16"/>
    <property type="match status" value="1"/>
</dbReference>
<dbReference type="InterPro" id="IPR047873">
    <property type="entry name" value="Ribosomal_uL16"/>
</dbReference>
<dbReference type="InterPro" id="IPR000114">
    <property type="entry name" value="Ribosomal_uL16_bact-type"/>
</dbReference>
<dbReference type="InterPro" id="IPR020798">
    <property type="entry name" value="Ribosomal_uL16_CS"/>
</dbReference>
<dbReference type="InterPro" id="IPR016180">
    <property type="entry name" value="Ribosomal_uL16_dom"/>
</dbReference>
<dbReference type="InterPro" id="IPR036920">
    <property type="entry name" value="Ribosomal_uL16_sf"/>
</dbReference>
<dbReference type="NCBIfam" id="TIGR01164">
    <property type="entry name" value="rplP_bact"/>
    <property type="match status" value="1"/>
</dbReference>
<dbReference type="PANTHER" id="PTHR12220">
    <property type="entry name" value="50S/60S RIBOSOMAL PROTEIN L16"/>
    <property type="match status" value="1"/>
</dbReference>
<dbReference type="PANTHER" id="PTHR12220:SF13">
    <property type="entry name" value="LARGE RIBOSOMAL SUBUNIT PROTEIN UL16M"/>
    <property type="match status" value="1"/>
</dbReference>
<dbReference type="Pfam" id="PF00252">
    <property type="entry name" value="Ribosomal_L16"/>
    <property type="match status" value="1"/>
</dbReference>
<dbReference type="PRINTS" id="PR00060">
    <property type="entry name" value="RIBOSOMALL16"/>
</dbReference>
<dbReference type="SUPFAM" id="SSF54686">
    <property type="entry name" value="Ribosomal protein L16p/L10e"/>
    <property type="match status" value="1"/>
</dbReference>
<dbReference type="PROSITE" id="PS00586">
    <property type="entry name" value="RIBOSOMAL_L16_1"/>
    <property type="match status" value="1"/>
</dbReference>
<accession>A3P0A6</accession>
<evidence type="ECO:0000255" key="1">
    <source>
        <dbReference type="HAMAP-Rule" id="MF_01342"/>
    </source>
</evidence>
<evidence type="ECO:0000256" key="2">
    <source>
        <dbReference type="SAM" id="MobiDB-lite"/>
    </source>
</evidence>
<evidence type="ECO:0000305" key="3"/>
<feature type="chain" id="PRO_1000054592" description="Large ribosomal subunit protein uL16">
    <location>
        <begin position="1"/>
        <end position="138"/>
    </location>
</feature>
<feature type="region of interest" description="Disordered" evidence="2">
    <location>
        <begin position="1"/>
        <end position="20"/>
    </location>
</feature>
<feature type="compositionally biased region" description="Basic residues" evidence="2">
    <location>
        <begin position="1"/>
        <end position="13"/>
    </location>
</feature>
<proteinExistence type="inferred from homology"/>